<name>YB39B_YEAST</name>
<proteinExistence type="predicted"/>
<dbReference type="EMBL" id="Z35801">
    <property type="status" value="NOT_ANNOTATED_CDS"/>
    <property type="molecule type" value="Genomic_DNA"/>
</dbReference>
<dbReference type="EMBL" id="BK006936">
    <property type="protein sequence ID" value="DAA07079.1"/>
    <property type="molecule type" value="Genomic_DNA"/>
</dbReference>
<dbReference type="SMR" id="P0C268"/>
<dbReference type="BioGRID" id="36983">
    <property type="interactions" value="36"/>
</dbReference>
<dbReference type="FunCoup" id="P0C268">
    <property type="interactions" value="7"/>
</dbReference>
<dbReference type="IntAct" id="P0C268">
    <property type="interactions" value="8"/>
</dbReference>
<dbReference type="MINT" id="P0C268"/>
<dbReference type="STRING" id="4932.YBL039W-B"/>
<dbReference type="PaxDb" id="4932-YBL039W-B"/>
<dbReference type="PeptideAtlas" id="P0C268"/>
<dbReference type="EnsemblFungi" id="YBL039W-B_mRNA">
    <property type="protein sequence ID" value="YBL039W-B"/>
    <property type="gene ID" value="YBL039W-B"/>
</dbReference>
<dbReference type="KEGG" id="sce:YBL039W-B"/>
<dbReference type="AGR" id="SGD:S000028517"/>
<dbReference type="SGD" id="S000028517">
    <property type="gene designation" value="YBL039W-B"/>
</dbReference>
<dbReference type="VEuPathDB" id="FungiDB:YBL039W-B"/>
<dbReference type="eggNOG" id="ENOG502SD2A">
    <property type="taxonomic scope" value="Eukaryota"/>
</dbReference>
<dbReference type="HOGENOM" id="CLU_206741_0_0_1"/>
<dbReference type="InParanoid" id="P0C268"/>
<dbReference type="OMA" id="STIAMWV"/>
<dbReference type="OrthoDB" id="4030176at2759"/>
<dbReference type="BioCyc" id="YEAST:G3O-29256-MONOMER"/>
<dbReference type="BioGRID-ORCS" id="1466441">
    <property type="hits" value="0 hits in 10 CRISPR screens"/>
</dbReference>
<dbReference type="PRO" id="PR:P0C268"/>
<dbReference type="Proteomes" id="UP000002311">
    <property type="component" value="Chromosome II"/>
</dbReference>
<dbReference type="RNAct" id="P0C268">
    <property type="molecule type" value="protein"/>
</dbReference>
<dbReference type="GO" id="GO:0005777">
    <property type="term" value="C:peroxisome"/>
    <property type="evidence" value="ECO:0007005"/>
    <property type="project" value="SGD"/>
</dbReference>
<feature type="chain" id="PRO_0000268624" description="Uncharacterized protein YBL039W-B">
    <location>
        <begin position="1"/>
        <end position="59"/>
    </location>
</feature>
<protein>
    <recommendedName>
        <fullName>Uncharacterized protein YBL039W-B</fullName>
    </recommendedName>
</protein>
<organism>
    <name type="scientific">Saccharomyces cerevisiae (strain ATCC 204508 / S288c)</name>
    <name type="common">Baker's yeast</name>
    <dbReference type="NCBI Taxonomy" id="559292"/>
    <lineage>
        <taxon>Eukaryota</taxon>
        <taxon>Fungi</taxon>
        <taxon>Dikarya</taxon>
        <taxon>Ascomycota</taxon>
        <taxon>Saccharomycotina</taxon>
        <taxon>Saccharomycetes</taxon>
        <taxon>Saccharomycetales</taxon>
        <taxon>Saccharomycetaceae</taxon>
        <taxon>Saccharomyces</taxon>
    </lineage>
</organism>
<gene>
    <name type="ordered locus">YBL039W-B</name>
</gene>
<keyword id="KW-1185">Reference proteome</keyword>
<sequence>MGFFNNNPVIEFFHRITRKPSTIAMWVFAGLICSSTFYLMFMSSPTIDFNSKSKKKNDK</sequence>
<accession>P0C268</accession>
<accession>D6VPV9</accession>
<reference key="1">
    <citation type="journal article" date="1994" name="EMBO J.">
        <title>Complete DNA sequence of yeast chromosome II.</title>
        <authorList>
            <person name="Feldmann H."/>
            <person name="Aigle M."/>
            <person name="Aljinovic G."/>
            <person name="Andre B."/>
            <person name="Baclet M.C."/>
            <person name="Barthe C."/>
            <person name="Baur A."/>
            <person name="Becam A.-M."/>
            <person name="Biteau N."/>
            <person name="Boles E."/>
            <person name="Brandt T."/>
            <person name="Brendel M."/>
            <person name="Brueckner M."/>
            <person name="Bussereau F."/>
            <person name="Christiansen C."/>
            <person name="Contreras R."/>
            <person name="Crouzet M."/>
            <person name="Cziepluch C."/>
            <person name="Demolis N."/>
            <person name="Delaveau T."/>
            <person name="Doignon F."/>
            <person name="Domdey H."/>
            <person name="Duesterhus S."/>
            <person name="Dubois E."/>
            <person name="Dujon B."/>
            <person name="El Bakkoury M."/>
            <person name="Entian K.-D."/>
            <person name="Feuermann M."/>
            <person name="Fiers W."/>
            <person name="Fobo G.M."/>
            <person name="Fritz C."/>
            <person name="Gassenhuber J."/>
            <person name="Glansdorff N."/>
            <person name="Goffeau A."/>
            <person name="Grivell L.A."/>
            <person name="de Haan M."/>
            <person name="Hein C."/>
            <person name="Herbert C.J."/>
            <person name="Hollenberg C.P."/>
            <person name="Holmstroem K."/>
            <person name="Jacq C."/>
            <person name="Jacquet M."/>
            <person name="Jauniaux J.-C."/>
            <person name="Jonniaux J.-L."/>
            <person name="Kallesoee T."/>
            <person name="Kiesau P."/>
            <person name="Kirchrath L."/>
            <person name="Koetter P."/>
            <person name="Korol S."/>
            <person name="Liebl S."/>
            <person name="Logghe M."/>
            <person name="Lohan A.J.E."/>
            <person name="Louis E.J."/>
            <person name="Li Z.Y."/>
            <person name="Maat M.J."/>
            <person name="Mallet L."/>
            <person name="Mannhaupt G."/>
            <person name="Messenguy F."/>
            <person name="Miosga T."/>
            <person name="Molemans F."/>
            <person name="Mueller S."/>
            <person name="Nasr F."/>
            <person name="Obermaier B."/>
            <person name="Perea J."/>
            <person name="Pierard A."/>
            <person name="Piravandi E."/>
            <person name="Pohl F.M."/>
            <person name="Pohl T.M."/>
            <person name="Potier S."/>
            <person name="Proft M."/>
            <person name="Purnelle B."/>
            <person name="Ramezani Rad M."/>
            <person name="Rieger M."/>
            <person name="Rose M."/>
            <person name="Schaaff-Gerstenschlaeger I."/>
            <person name="Scherens B."/>
            <person name="Schwarzlose C."/>
            <person name="Skala J."/>
            <person name="Slonimski P.P."/>
            <person name="Smits P.H.M."/>
            <person name="Souciet J.-L."/>
            <person name="Steensma H.Y."/>
            <person name="Stucka R."/>
            <person name="Urrestarazu L.A."/>
            <person name="van der Aart Q.J.M."/>
            <person name="Van Dyck L."/>
            <person name="Vassarotti A."/>
            <person name="Vetter I."/>
            <person name="Vierendeels F."/>
            <person name="Vissers S."/>
            <person name="Wagner G."/>
            <person name="de Wergifosse P."/>
            <person name="Wolfe K.H."/>
            <person name="Zagulski M."/>
            <person name="Zimmermann F.K."/>
            <person name="Mewes H.-W."/>
            <person name="Kleine K."/>
        </authorList>
    </citation>
    <scope>NUCLEOTIDE SEQUENCE [LARGE SCALE GENOMIC DNA]</scope>
    <source>
        <strain>ATCC 204508 / S288c</strain>
    </source>
</reference>
<reference key="2">
    <citation type="journal article" date="2014" name="G3 (Bethesda)">
        <title>The reference genome sequence of Saccharomyces cerevisiae: Then and now.</title>
        <authorList>
            <person name="Engel S.R."/>
            <person name="Dietrich F.S."/>
            <person name="Fisk D.G."/>
            <person name="Binkley G."/>
            <person name="Balakrishnan R."/>
            <person name="Costanzo M.C."/>
            <person name="Dwight S.S."/>
            <person name="Hitz B.C."/>
            <person name="Karra K."/>
            <person name="Nash R.S."/>
            <person name="Weng S."/>
            <person name="Wong E.D."/>
            <person name="Lloyd P."/>
            <person name="Skrzypek M.S."/>
            <person name="Miyasato S.R."/>
            <person name="Simison M."/>
            <person name="Cherry J.M."/>
        </authorList>
    </citation>
    <scope>GENOME REANNOTATION</scope>
    <source>
        <strain>ATCC 204508 / S288c</strain>
    </source>
</reference>
<reference key="3">
    <citation type="journal article" date="2003" name="Genome Biol.">
        <title>Reinvestigation of the Saccharomyces cerevisiae genome annotation by comparison to the genome of a related fungus: Ashbya gossypii.</title>
        <authorList>
            <person name="Brachat S."/>
            <person name="Dietrich F.S."/>
            <person name="Voegeli S."/>
            <person name="Zhang Z."/>
            <person name="Stuart L."/>
            <person name="Lerch A."/>
            <person name="Gates K."/>
            <person name="Gaffney T.D."/>
            <person name="Philippsen P."/>
        </authorList>
    </citation>
    <scope>GENOME REANNOTATION</scope>
</reference>